<proteinExistence type="inferred from homology"/>
<feature type="chain" id="PRO_0000406488" description="Glucose starvation modulator protein 1">
    <location>
        <begin position="1"/>
        <end position="520"/>
    </location>
</feature>
<feature type="domain" description="PAS" evidence="2">
    <location>
        <begin position="376"/>
        <end position="445"/>
    </location>
</feature>
<feature type="DNA-binding region" description="Zn(2)-C6 fungal-type" evidence="3">
    <location>
        <begin position="20"/>
        <end position="48"/>
    </location>
</feature>
<feature type="region of interest" description="Disordered" evidence="4">
    <location>
        <begin position="63"/>
        <end position="104"/>
    </location>
</feature>
<feature type="region of interest" description="Disordered" evidence="4">
    <location>
        <begin position="194"/>
        <end position="213"/>
    </location>
</feature>
<feature type="compositionally biased region" description="Low complexity" evidence="4">
    <location>
        <begin position="74"/>
        <end position="85"/>
    </location>
</feature>
<feature type="compositionally biased region" description="Polar residues" evidence="4">
    <location>
        <begin position="90"/>
        <end position="104"/>
    </location>
</feature>
<sequence length="520" mass="59038">MTKKLSPLEKQARRPASRACSFCHSKHLQCSNNRPCKNCVKRNIADQCRDVERKRANYMTLAAKNKQGSPNTVSLESSSSPFSPLHKGHINSQSSQPLDPSSGRVNTDFFSQSETTVPSPWPMDLESKERTNAILNTTDDVLNKILYDEQASKVPSAQASEMTPSNSSIDGVFNSNYLNQEYLMLGDIILNSKPASPTPSSTSEYQTIPPNEMMGTVDYNEVYRDTKSKKLKESRPFISLGFSNPPDLDNRKLPGEINIANEIMDPSKRAQVTTTNDYVSPLVTRHIYQSVQDIYANKIINYEYPTSYHALTFFLKKRFSGTSLPPEQKQQKRNNLLIILKLIASYRPTFISAHKSLLKPYDLMFLEMTFQRSLIDYEKLSHLNSSPTIIWRRTGEIVSISDEILSLLGYSLNSILSKRTFIMELMYDDESIINYFKLFKSVAVGNLHSSIITRCKLMKNPDRDRSTRASTTGTEQQLTEADYIEFCAVWTVKRDLFDLPMLIMGQFLPVLPAGDGVRRY</sequence>
<name>GSM1_PICGU</name>
<dbReference type="EMBL" id="CH408162">
    <property type="protein sequence ID" value="EDK41795.2"/>
    <property type="molecule type" value="Genomic_DNA"/>
</dbReference>
<dbReference type="RefSeq" id="XP_001482130.1">
    <property type="nucleotide sequence ID" value="XM_001482080.1"/>
</dbReference>
<dbReference type="FunCoup" id="A5DRJ2">
    <property type="interactions" value="159"/>
</dbReference>
<dbReference type="GeneID" id="5123950"/>
<dbReference type="KEGG" id="pgu:PGUG_05893"/>
<dbReference type="VEuPathDB" id="FungiDB:PGUG_05893"/>
<dbReference type="eggNOG" id="ENOG502R2ZP">
    <property type="taxonomic scope" value="Eukaryota"/>
</dbReference>
<dbReference type="HOGENOM" id="CLU_010748_2_2_1"/>
<dbReference type="InParanoid" id="A5DRJ2"/>
<dbReference type="OMA" id="FCHEKHL"/>
<dbReference type="OrthoDB" id="2538135at2759"/>
<dbReference type="Proteomes" id="UP000001997">
    <property type="component" value="Unassembled WGS sequence"/>
</dbReference>
<dbReference type="GO" id="GO:0005634">
    <property type="term" value="C:nucleus"/>
    <property type="evidence" value="ECO:0007669"/>
    <property type="project" value="UniProtKB-SubCell"/>
</dbReference>
<dbReference type="GO" id="GO:0000981">
    <property type="term" value="F:DNA-binding transcription factor activity, RNA polymerase II-specific"/>
    <property type="evidence" value="ECO:0007669"/>
    <property type="project" value="InterPro"/>
</dbReference>
<dbReference type="GO" id="GO:0000977">
    <property type="term" value="F:RNA polymerase II transcription regulatory region sequence-specific DNA binding"/>
    <property type="evidence" value="ECO:0007669"/>
    <property type="project" value="TreeGrafter"/>
</dbReference>
<dbReference type="GO" id="GO:0008270">
    <property type="term" value="F:zinc ion binding"/>
    <property type="evidence" value="ECO:0007669"/>
    <property type="project" value="InterPro"/>
</dbReference>
<dbReference type="GO" id="GO:0009267">
    <property type="term" value="P:cellular response to starvation"/>
    <property type="evidence" value="ECO:0007669"/>
    <property type="project" value="TreeGrafter"/>
</dbReference>
<dbReference type="CDD" id="cd00067">
    <property type="entry name" value="GAL4"/>
    <property type="match status" value="1"/>
</dbReference>
<dbReference type="InterPro" id="IPR050335">
    <property type="entry name" value="ERT1_acuK_gluconeogen_tf"/>
</dbReference>
<dbReference type="InterPro" id="IPR000014">
    <property type="entry name" value="PAS"/>
</dbReference>
<dbReference type="InterPro" id="IPR056751">
    <property type="entry name" value="PAS_13"/>
</dbReference>
<dbReference type="InterPro" id="IPR036864">
    <property type="entry name" value="Zn2-C6_fun-type_DNA-bd_sf"/>
</dbReference>
<dbReference type="InterPro" id="IPR001138">
    <property type="entry name" value="Zn2Cys6_DnaBD"/>
</dbReference>
<dbReference type="PANTHER" id="PTHR47659:SF8">
    <property type="entry name" value="GLUCOSE STARVATION MODULATOR PROTEIN 1"/>
    <property type="match status" value="1"/>
</dbReference>
<dbReference type="PANTHER" id="PTHR47659">
    <property type="entry name" value="ZN(II)2CYS6 TRANSCRIPTION FACTOR (EUROFUNG)-RELATED"/>
    <property type="match status" value="1"/>
</dbReference>
<dbReference type="Pfam" id="PF24990">
    <property type="entry name" value="PAS_13"/>
    <property type="match status" value="1"/>
</dbReference>
<dbReference type="Pfam" id="PF00172">
    <property type="entry name" value="Zn_clus"/>
    <property type="match status" value="1"/>
</dbReference>
<dbReference type="SMART" id="SM00066">
    <property type="entry name" value="GAL4"/>
    <property type="match status" value="1"/>
</dbReference>
<dbReference type="SUPFAM" id="SSF57701">
    <property type="entry name" value="Zn2/Cys6 DNA-binding domain"/>
    <property type="match status" value="1"/>
</dbReference>
<dbReference type="PROSITE" id="PS50112">
    <property type="entry name" value="PAS"/>
    <property type="match status" value="1"/>
</dbReference>
<dbReference type="PROSITE" id="PS00463">
    <property type="entry name" value="ZN2_CY6_FUNGAL_1"/>
    <property type="match status" value="1"/>
</dbReference>
<dbReference type="PROSITE" id="PS50048">
    <property type="entry name" value="ZN2_CY6_FUNGAL_2"/>
    <property type="match status" value="1"/>
</dbReference>
<gene>
    <name type="primary">GSM1</name>
    <name type="ORF">PGUG_05893</name>
</gene>
<accession>A5DRJ2</accession>
<protein>
    <recommendedName>
        <fullName>Glucose starvation modulator protein 1</fullName>
    </recommendedName>
</protein>
<keyword id="KW-0238">DNA-binding</keyword>
<keyword id="KW-0479">Metal-binding</keyword>
<keyword id="KW-0539">Nucleus</keyword>
<keyword id="KW-1185">Reference proteome</keyword>
<keyword id="KW-0804">Transcription</keyword>
<keyword id="KW-0805">Transcription regulation</keyword>
<keyword id="KW-0862">Zinc</keyword>
<comment type="function">
    <text evidence="1">Transcription factor which regulates nonfermentable carbon utilization.</text>
</comment>
<comment type="subcellular location">
    <subcellularLocation>
        <location evidence="3">Nucleus</location>
    </subcellularLocation>
</comment>
<comment type="similarity">
    <text evidence="5">Belongs to the ERT1/acuK family.</text>
</comment>
<evidence type="ECO:0000250" key="1"/>
<evidence type="ECO:0000255" key="2">
    <source>
        <dbReference type="PROSITE-ProRule" id="PRU00140"/>
    </source>
</evidence>
<evidence type="ECO:0000255" key="3">
    <source>
        <dbReference type="PROSITE-ProRule" id="PRU00227"/>
    </source>
</evidence>
<evidence type="ECO:0000256" key="4">
    <source>
        <dbReference type="SAM" id="MobiDB-lite"/>
    </source>
</evidence>
<evidence type="ECO:0000305" key="5"/>
<reference key="1">
    <citation type="journal article" date="2009" name="Nature">
        <title>Evolution of pathogenicity and sexual reproduction in eight Candida genomes.</title>
        <authorList>
            <person name="Butler G."/>
            <person name="Rasmussen M.D."/>
            <person name="Lin M.F."/>
            <person name="Santos M.A.S."/>
            <person name="Sakthikumar S."/>
            <person name="Munro C.A."/>
            <person name="Rheinbay E."/>
            <person name="Grabherr M."/>
            <person name="Forche A."/>
            <person name="Reedy J.L."/>
            <person name="Agrafioti I."/>
            <person name="Arnaud M.B."/>
            <person name="Bates S."/>
            <person name="Brown A.J.P."/>
            <person name="Brunke S."/>
            <person name="Costanzo M.C."/>
            <person name="Fitzpatrick D.A."/>
            <person name="de Groot P.W.J."/>
            <person name="Harris D."/>
            <person name="Hoyer L.L."/>
            <person name="Hube B."/>
            <person name="Klis F.M."/>
            <person name="Kodira C."/>
            <person name="Lennard N."/>
            <person name="Logue M.E."/>
            <person name="Martin R."/>
            <person name="Neiman A.M."/>
            <person name="Nikolaou E."/>
            <person name="Quail M.A."/>
            <person name="Quinn J."/>
            <person name="Santos M.C."/>
            <person name="Schmitzberger F.F."/>
            <person name="Sherlock G."/>
            <person name="Shah P."/>
            <person name="Silverstein K.A.T."/>
            <person name="Skrzypek M.S."/>
            <person name="Soll D."/>
            <person name="Staggs R."/>
            <person name="Stansfield I."/>
            <person name="Stumpf M.P.H."/>
            <person name="Sudbery P.E."/>
            <person name="Srikantha T."/>
            <person name="Zeng Q."/>
            <person name="Berman J."/>
            <person name="Berriman M."/>
            <person name="Heitman J."/>
            <person name="Gow N.A.R."/>
            <person name="Lorenz M.C."/>
            <person name="Birren B.W."/>
            <person name="Kellis M."/>
            <person name="Cuomo C.A."/>
        </authorList>
    </citation>
    <scope>NUCLEOTIDE SEQUENCE [LARGE SCALE GENOMIC DNA]</scope>
    <source>
        <strain>ATCC 6260 / CBS 566 / DSM 6381 / JCM 1539 / NBRC 10279 / NRRL Y-324</strain>
    </source>
</reference>
<organism>
    <name type="scientific">Meyerozyma guilliermondii (strain ATCC 6260 / CBS 566 / DSM 6381 / JCM 1539 / NBRC 10279 / NRRL Y-324)</name>
    <name type="common">Yeast</name>
    <name type="synonym">Candida guilliermondii</name>
    <dbReference type="NCBI Taxonomy" id="294746"/>
    <lineage>
        <taxon>Eukaryota</taxon>
        <taxon>Fungi</taxon>
        <taxon>Dikarya</taxon>
        <taxon>Ascomycota</taxon>
        <taxon>Saccharomycotina</taxon>
        <taxon>Pichiomycetes</taxon>
        <taxon>Debaryomycetaceae</taxon>
        <taxon>Meyerozyma</taxon>
    </lineage>
</organism>